<accession>Q27081</accession>
<protein>
    <recommendedName>
        <fullName evidence="8">Clotting factor B</fullName>
        <ecNumber>3.4.21.85</ecNumber>
    </recommendedName>
    <alternativeName>
        <fullName evidence="9 11">Coagulation factor B</fullName>
    </alternativeName>
    <component>
        <recommendedName>
            <fullName evidence="8 9">Clotting factor B light chain</fullName>
        </recommendedName>
    </component>
    <component>
        <recommendedName>
            <fullName evidence="8 9">Clotting factor B heavy chain</fullName>
        </recommendedName>
    </component>
</protein>
<comment type="function">
    <text evidence="5 6">This enzyme is closely associated with an endotoxin-sensitive hemolymph coagulation system which may play important roles in both hemostasis and host defense mechanisms. Its active form catalyzes the activation of proclotting enzyme. Does not activate the mammalian coagulation factors factor IX, factor X, prothrombin, plasminogen, protein C or prekallikrein. Does not hydrolyze fibrinogen. Does not catalyze the activation of factor C or coagulogen.</text>
</comment>
<comment type="catalytic activity">
    <reaction evidence="5">
        <text>Selective cleavage of 98-Arg-|-Ile-99 bond in Limulus proclotting enzyme to form active clotting enzyme.</text>
        <dbReference type="EC" id="3.4.21.85"/>
    </reaction>
</comment>
<comment type="activity regulation">
    <text evidence="6">Strongly inhibited by alpha2-plasmin inhibitor and DFP. Partially inhibited by benzamidine, leupeptin and PCMB.</text>
</comment>
<comment type="biophysicochemical properties">
    <kinetics>
        <Vmax evidence="6">0.9 umol/min/mg enzyme toward Boc-Val-Pro-Arg-MCA</Vmax>
        <Vmax evidence="6">0.1 umol/min/mg enzyme toward Boc-Ile-Glu-Gly-Arg-MCA</Vmax>
        <Vmax evidence="6">0.2 umol/min/mg enzyme toward Boc-Leu-Ser-Thr-Arg-MCA</Vmax>
        <Vmax evidence="6">0.1 umol/min/mg enzyme toward Boc-Leu-Gly-Arg-MCA</Vmax>
        <Vmax evidence="6">1.1 umol/min/mg enzyme toward Bz-Thr-Ser-Arg-MCA</Vmax>
        <Vmax evidence="6">0.7 umol/min/mg enzyme toward Bz-Ser-Ser-Arg-MCA</Vmax>
        <Vmax evidence="6">1.3 umol/min/mg enzyme toward Bz-Ser-Thr-Arg-MCA</Vmax>
        <Vmax evidence="6">1.9 umol/min/mg enzyme toward Bz-Thr-Thr-Arg-MCA</Vmax>
        <Vmax evidence="6">1.1 umol/min/mg enzyme toward Boc-Leu-Thr-Arg-MCA</Vmax>
        <Vmax evidence="6">2.1 umol/min/mg enzyme toward Boc-Met-Thr-Arg-MCA</Vmax>
        <Vmax evidence="6">1.2 umol/min/mg enzyme toward Boc-Gln-Arg-Arg-MCA</Vmax>
        <Vmax evidence="6">0.6 umol/min/mg enzyme toward Boc-Asp-Pro-Arg-MCA</Vmax>
    </kinetics>
</comment>
<comment type="subunit">
    <text evidence="6">Upon activation by factor C, it is converted to a two-chain active form composed of a light and a heavy chain linked by a disulfide bond.</text>
</comment>
<comment type="subcellular location">
    <subcellularLocation>
        <location evidence="10">Secreted</location>
    </subcellularLocation>
    <text evidence="10">Secreted in hemolymph.</text>
</comment>
<comment type="domain">
    <text evidence="4">The clip domain consists of 35-55 residues which are 'knitted' together usually by 3 conserved disulfide bonds forming a clip-like compact structure.</text>
</comment>
<comment type="similarity">
    <text evidence="4">Belongs to the peptidase S1 family. CLIP subfamily.</text>
</comment>
<dbReference type="EC" id="3.4.21.85"/>
<dbReference type="EMBL" id="D14701">
    <property type="protein sequence ID" value="BAA03528.1"/>
    <property type="molecule type" value="mRNA"/>
</dbReference>
<dbReference type="PIR" id="A48050">
    <property type="entry name" value="A48050"/>
</dbReference>
<dbReference type="SMR" id="Q27081"/>
<dbReference type="MEROPS" id="S01.220"/>
<dbReference type="KEGG" id="ag:BAA03528"/>
<dbReference type="GO" id="GO:0005576">
    <property type="term" value="C:extracellular region"/>
    <property type="evidence" value="ECO:0007669"/>
    <property type="project" value="UniProtKB-SubCell"/>
</dbReference>
<dbReference type="GO" id="GO:0004175">
    <property type="term" value="F:endopeptidase activity"/>
    <property type="evidence" value="ECO:0000314"/>
    <property type="project" value="UniProtKB"/>
</dbReference>
<dbReference type="GO" id="GO:0004252">
    <property type="term" value="F:serine-type endopeptidase activity"/>
    <property type="evidence" value="ECO:0007669"/>
    <property type="project" value="InterPro"/>
</dbReference>
<dbReference type="GO" id="GO:0042381">
    <property type="term" value="P:hemolymph coagulation"/>
    <property type="evidence" value="ECO:0000314"/>
    <property type="project" value="UniProtKB"/>
</dbReference>
<dbReference type="GO" id="GO:0016485">
    <property type="term" value="P:protein processing"/>
    <property type="evidence" value="ECO:0000314"/>
    <property type="project" value="UniProtKB"/>
</dbReference>
<dbReference type="CDD" id="cd00190">
    <property type="entry name" value="Tryp_SPc"/>
    <property type="match status" value="1"/>
</dbReference>
<dbReference type="FunFam" id="2.40.10.10:FF:000047">
    <property type="entry name" value="Trypsin eta"/>
    <property type="match status" value="1"/>
</dbReference>
<dbReference type="Gene3D" id="2.40.10.10">
    <property type="entry name" value="Trypsin-like serine proteases"/>
    <property type="match status" value="1"/>
</dbReference>
<dbReference type="InterPro" id="IPR022700">
    <property type="entry name" value="CLIP"/>
</dbReference>
<dbReference type="InterPro" id="IPR009003">
    <property type="entry name" value="Peptidase_S1_PA"/>
</dbReference>
<dbReference type="InterPro" id="IPR043504">
    <property type="entry name" value="Peptidase_S1_PA_chymotrypsin"/>
</dbReference>
<dbReference type="InterPro" id="IPR001314">
    <property type="entry name" value="Peptidase_S1A"/>
</dbReference>
<dbReference type="InterPro" id="IPR051487">
    <property type="entry name" value="Ser/Thr_Proteases_Immune/Dev"/>
</dbReference>
<dbReference type="InterPro" id="IPR001254">
    <property type="entry name" value="Trypsin_dom"/>
</dbReference>
<dbReference type="InterPro" id="IPR033116">
    <property type="entry name" value="TRYPSIN_SER"/>
</dbReference>
<dbReference type="PANTHER" id="PTHR24256">
    <property type="entry name" value="TRYPTASE-RELATED"/>
    <property type="match status" value="1"/>
</dbReference>
<dbReference type="Pfam" id="PF00089">
    <property type="entry name" value="Trypsin"/>
    <property type="match status" value="1"/>
</dbReference>
<dbReference type="PRINTS" id="PR00722">
    <property type="entry name" value="CHYMOTRYPSIN"/>
</dbReference>
<dbReference type="SMART" id="SM00680">
    <property type="entry name" value="CLIP"/>
    <property type="match status" value="1"/>
</dbReference>
<dbReference type="SMART" id="SM00020">
    <property type="entry name" value="Tryp_SPc"/>
    <property type="match status" value="1"/>
</dbReference>
<dbReference type="SUPFAM" id="SSF50494">
    <property type="entry name" value="Trypsin-like serine proteases"/>
    <property type="match status" value="1"/>
</dbReference>
<dbReference type="PROSITE" id="PS51888">
    <property type="entry name" value="CLIP"/>
    <property type="match status" value="1"/>
</dbReference>
<dbReference type="PROSITE" id="PS50240">
    <property type="entry name" value="TRYPSIN_DOM"/>
    <property type="match status" value="1"/>
</dbReference>
<dbReference type="PROSITE" id="PS00135">
    <property type="entry name" value="TRYPSIN_SER"/>
    <property type="match status" value="1"/>
</dbReference>
<feature type="signal peptide" evidence="7">
    <location>
        <begin position="1"/>
        <end position="23"/>
    </location>
</feature>
<feature type="chain" id="PRO_0000394311" description="Clotting factor B light chain" evidence="7">
    <location>
        <begin position="24"/>
        <end position="103"/>
    </location>
</feature>
<feature type="propeptide" id="PRO_0000394312" description="Activation peptide" evidence="7">
    <location>
        <begin position="104"/>
        <end position="124"/>
    </location>
</feature>
<feature type="chain" id="PRO_0000394313" description="Clotting factor B heavy chain" evidence="7">
    <location>
        <begin position="125"/>
        <end position="400"/>
    </location>
</feature>
<feature type="domain" description="Clip" evidence="4">
    <location>
        <begin position="36"/>
        <end position="80"/>
    </location>
</feature>
<feature type="domain" description="Peptidase S1" evidence="3">
    <location>
        <begin position="148"/>
        <end position="392"/>
    </location>
</feature>
<feature type="active site" description="Charge relay system" evidence="1">
    <location>
        <position position="192"/>
    </location>
</feature>
<feature type="active site" description="Charge relay system" evidence="1">
    <location>
        <position position="240"/>
    </location>
</feature>
<feature type="active site" description="Charge relay system" evidence="1">
    <location>
        <position position="344"/>
    </location>
</feature>
<feature type="glycosylation site" description="N-linked (GlcNAc...) asparagine" evidence="2">
    <location>
        <position position="140"/>
    </location>
</feature>
<feature type="glycosylation site" description="N-linked (GlcNAc...) asparagine" evidence="2">
    <location>
        <position position="251"/>
    </location>
</feature>
<feature type="glycosylation site" description="N-linked (GlcNAc...) asparagine" evidence="2">
    <location>
        <position position="352"/>
    </location>
</feature>
<feature type="disulfide bond" evidence="4">
    <location>
        <begin position="37"/>
        <end position="79"/>
    </location>
</feature>
<feature type="disulfide bond" evidence="4">
    <location>
        <begin position="47"/>
        <end position="68"/>
    </location>
</feature>
<feature type="disulfide bond" evidence="4">
    <location>
        <begin position="53"/>
        <end position="80"/>
    </location>
</feature>
<feature type="disulfide bond" evidence="3">
    <location>
        <begin position="307"/>
        <end position="329"/>
    </location>
</feature>
<feature type="disulfide bond" evidence="3">
    <location>
        <begin position="340"/>
        <end position="368"/>
    </location>
</feature>
<proteinExistence type="evidence at protein level"/>
<keyword id="KW-0903">Direct protein sequencing</keyword>
<keyword id="KW-1015">Disulfide bond</keyword>
<keyword id="KW-0325">Glycoprotein</keyword>
<keyword id="KW-0353">Hemolymph clotting</keyword>
<keyword id="KW-0378">Hydrolase</keyword>
<keyword id="KW-0645">Protease</keyword>
<keyword id="KW-0964">Secreted</keyword>
<keyword id="KW-0720">Serine protease</keyword>
<keyword id="KW-0732">Signal</keyword>
<keyword id="KW-0865">Zymogen</keyword>
<organism>
    <name type="scientific">Tachypleus tridentatus</name>
    <name type="common">Japanese horseshoe crab</name>
    <dbReference type="NCBI Taxonomy" id="6853"/>
    <lineage>
        <taxon>Eukaryota</taxon>
        <taxon>Metazoa</taxon>
        <taxon>Ecdysozoa</taxon>
        <taxon>Arthropoda</taxon>
        <taxon>Chelicerata</taxon>
        <taxon>Merostomata</taxon>
        <taxon>Xiphosura</taxon>
        <taxon>Limulidae</taxon>
        <taxon>Tachypleus</taxon>
    </lineage>
</organism>
<evidence type="ECO:0000250" key="1">
    <source>
        <dbReference type="UniProtKB" id="P26262"/>
    </source>
</evidence>
<evidence type="ECO:0000255" key="2"/>
<evidence type="ECO:0000255" key="3">
    <source>
        <dbReference type="PROSITE-ProRule" id="PRU00274"/>
    </source>
</evidence>
<evidence type="ECO:0000255" key="4">
    <source>
        <dbReference type="PROSITE-ProRule" id="PRU01236"/>
    </source>
</evidence>
<evidence type="ECO:0000269" key="5">
    <source>
    </source>
</evidence>
<evidence type="ECO:0000269" key="6">
    <source>
    </source>
</evidence>
<evidence type="ECO:0000269" key="7">
    <source>
    </source>
</evidence>
<evidence type="ECO:0000303" key="8">
    <source>
    </source>
</evidence>
<evidence type="ECO:0000303" key="9">
    <source>
    </source>
</evidence>
<evidence type="ECO:0000305" key="10"/>
<evidence type="ECO:0000312" key="11">
    <source>
        <dbReference type="EMBL" id="BAA03528.1"/>
    </source>
</evidence>
<name>CFB_TACTR</name>
<reference evidence="10 11" key="1">
    <citation type="journal article" date="1993" name="J. Biol. Chem.">
        <title>Horseshoe crab coagulation factor B. A unique serine protease zymogen activated by cleavage of an Ile-Ile bond.</title>
        <authorList>
            <person name="Muta T."/>
            <person name="Oda T."/>
            <person name="Iwanaga S."/>
        </authorList>
    </citation>
    <scope>NUCLEOTIDE SEQUENCE [MRNA]</scope>
    <scope>PROTEIN SEQUENCE OF 24-44; 49-53; 55-61; 63-68; 127-136; 148-150; 152-158; 162-185; 187-247; 274-280; 307-313; 322-337; 368-373; 376-378; 380-385 AND 391-400</scope>
    <scope>PROTEOLYTIC PROCESSING</scope>
    <source>
        <tissue evidence="7">Hemocyte</tissue>
    </source>
</reference>
<reference evidence="10" key="2">
    <citation type="journal article" date="1986" name="J. Biochem.">
        <title>Purification and properties of intracellular clotting factor, factor B, from horseshoe crab (Tachypleus tridentatus) hemocytes.</title>
        <authorList>
            <person name="Nakamura T."/>
            <person name="Horiuchi T."/>
            <person name="Morita T."/>
            <person name="Iwanaga S."/>
        </authorList>
    </citation>
    <scope>FUNCTION</scope>
    <scope>ACTIVITY REGULATION</scope>
    <scope>BIOPHYSICOCHEMICAL PROPERTIES</scope>
    <scope>SUBUNIT</scope>
</reference>
<reference evidence="10" key="3">
    <citation type="journal article" date="1990" name="J. Biol. Chem.">
        <title>Proclotting enzyme from horseshoe crab hemocytes. cDNA cloning, disulfide locations, and subcellular localization.</title>
        <authorList>
            <person name="Muta T."/>
            <person name="Hashimoto R."/>
            <person name="Miyata T."/>
            <person name="Nishimura H."/>
            <person name="Toh Y."/>
            <person name="Iwanaga S."/>
        </authorList>
    </citation>
    <scope>FUNCTION</scope>
    <scope>CATALYTIC ACTIVITY</scope>
</reference>
<sequence>MTWICVITLFALASATLGNKVSRVGVLFPKTRNDNECTARGGLKGSCKSLIDCPSVLATLKDSFPVVCSWNGRFQPIVCCPDAIAPPPVTTTAVTVISTKEPKLPRLHISGCGKRKVKIDITTVGRSGSPILPPISTPQNSTGGRGIIAGGVEAKIGAWPWMAAVFVKNFGIGRFHCAGSIISNKYILSAAHAFLIGGRKLTPTRLAVRVGGHYIKRGQEYPVKDVIIHPHYVEKENYNDIAIIELKEELNFTDLVNPICLPDPETVTDPLKDRIVTAAGWGDLDFSGPRSQVLREVSIPVVPVDKCDQAYEKLNTPSLKNGITNNFLCAGLEEGGKDACQGDSGGPLMLVNNTRWIVVGVVSFGHKCAEEGYPGVYSRVASYLDWIAKVTNSLDHAVTN</sequence>